<comment type="function">
    <text evidence="1">Probable cell surface protease.</text>
</comment>
<comment type="cofactor">
    <cofactor evidence="1">
        <name>Zn(2+)</name>
        <dbReference type="ChEBI" id="CHEBI:29105"/>
    </cofactor>
    <text evidence="1">Binds 1 zinc ion per subunit.</text>
</comment>
<comment type="subcellular location">
    <subcellularLocation>
        <location evidence="6">Cell membrane</location>
        <topology evidence="6">Single-pass type II membrane protein</topology>
    </subcellularLocation>
</comment>
<comment type="similarity">
    <text evidence="3 6">Belongs to the peptidase M13 family.</text>
</comment>
<organism>
    <name type="scientific">Caenorhabditis elegans</name>
    <dbReference type="NCBI Taxonomy" id="6239"/>
    <lineage>
        <taxon>Eukaryota</taxon>
        <taxon>Metazoa</taxon>
        <taxon>Ecdysozoa</taxon>
        <taxon>Nematoda</taxon>
        <taxon>Chromadorea</taxon>
        <taxon>Rhabditida</taxon>
        <taxon>Rhabditina</taxon>
        <taxon>Rhabditomorpha</taxon>
        <taxon>Rhabditoidea</taxon>
        <taxon>Rhabditidae</taxon>
        <taxon>Peloderinae</taxon>
        <taxon>Caenorhabditis</taxon>
    </lineage>
</organism>
<keyword id="KW-1003">Cell membrane</keyword>
<keyword id="KW-1015">Disulfide bond</keyword>
<keyword id="KW-0325">Glycoprotein</keyword>
<keyword id="KW-0378">Hydrolase</keyword>
<keyword id="KW-0472">Membrane</keyword>
<keyword id="KW-0479">Metal-binding</keyword>
<keyword id="KW-0482">Metalloprotease</keyword>
<keyword id="KW-0645">Protease</keyword>
<keyword id="KW-1185">Reference proteome</keyword>
<keyword id="KW-0735">Signal-anchor</keyword>
<keyword id="KW-0812">Transmembrane</keyword>
<keyword id="KW-1133">Transmembrane helix</keyword>
<keyword id="KW-0862">Zinc</keyword>
<protein>
    <recommendedName>
        <fullName>Neprilysin-21</fullName>
        <ecNumber>3.4.24.-</ecNumber>
    </recommendedName>
</protein>
<name>NPL21_CAEEL</name>
<dbReference type="EC" id="3.4.24.-"/>
<dbReference type="EMBL" id="Z77135">
    <property type="protein sequence ID" value="CAB00879.1"/>
    <property type="molecule type" value="Genomic_DNA"/>
</dbReference>
<dbReference type="PIR" id="T24949">
    <property type="entry name" value="T24949"/>
</dbReference>
<dbReference type="RefSeq" id="NP_506520.1">
    <property type="nucleotide sequence ID" value="NM_074119.8"/>
</dbReference>
<dbReference type="SMR" id="Q22523"/>
<dbReference type="FunCoup" id="Q22523">
    <property type="interactions" value="66"/>
</dbReference>
<dbReference type="STRING" id="6239.T16A9.4c.1"/>
<dbReference type="MEROPS" id="M13.A31"/>
<dbReference type="GlyCosmos" id="Q22523">
    <property type="glycosylation" value="10 sites, No reported glycans"/>
</dbReference>
<dbReference type="iPTMnet" id="Q22523"/>
<dbReference type="PaxDb" id="6239-T16A9.4b.1"/>
<dbReference type="EnsemblMetazoa" id="T16A9.4a.1">
    <property type="protein sequence ID" value="T16A9.4a.1"/>
    <property type="gene ID" value="WBGene00011794"/>
</dbReference>
<dbReference type="GeneID" id="179925"/>
<dbReference type="KEGG" id="cel:CELE_T16A9.4"/>
<dbReference type="UCSC" id="T16A9.4">
    <property type="organism name" value="c. elegans"/>
</dbReference>
<dbReference type="AGR" id="WB:WBGene00011794"/>
<dbReference type="CTD" id="179925"/>
<dbReference type="WormBase" id="T16A9.4a">
    <property type="protein sequence ID" value="CE18259"/>
    <property type="gene ID" value="WBGene00011794"/>
    <property type="gene designation" value="nep-21"/>
</dbReference>
<dbReference type="eggNOG" id="KOG3624">
    <property type="taxonomic scope" value="Eukaryota"/>
</dbReference>
<dbReference type="HOGENOM" id="CLU_006187_8_0_1"/>
<dbReference type="InParanoid" id="Q22523"/>
<dbReference type="OrthoDB" id="6475849at2759"/>
<dbReference type="PhylomeDB" id="Q22523"/>
<dbReference type="Reactome" id="R-CEL-2022377">
    <property type="pathway name" value="Metabolism of Angiotensinogen to Angiotensins"/>
</dbReference>
<dbReference type="Reactome" id="R-CEL-5578768">
    <property type="pathway name" value="Physiological factors"/>
</dbReference>
<dbReference type="Reactome" id="R-CEL-6798695">
    <property type="pathway name" value="Neutrophil degranulation"/>
</dbReference>
<dbReference type="PRO" id="PR:Q22523"/>
<dbReference type="Proteomes" id="UP000001940">
    <property type="component" value="Chromosome V"/>
</dbReference>
<dbReference type="Bgee" id="WBGene00011794">
    <property type="expression patterns" value="Expressed in pharyngeal muscle cell (C elegans) and 3 other cell types or tissues"/>
</dbReference>
<dbReference type="ExpressionAtlas" id="Q22523">
    <property type="expression patterns" value="baseline and differential"/>
</dbReference>
<dbReference type="GO" id="GO:0005886">
    <property type="term" value="C:plasma membrane"/>
    <property type="evidence" value="ECO:0000318"/>
    <property type="project" value="GO_Central"/>
</dbReference>
<dbReference type="GO" id="GO:0046872">
    <property type="term" value="F:metal ion binding"/>
    <property type="evidence" value="ECO:0007669"/>
    <property type="project" value="UniProtKB-KW"/>
</dbReference>
<dbReference type="GO" id="GO:0004222">
    <property type="term" value="F:metalloendopeptidase activity"/>
    <property type="evidence" value="ECO:0000318"/>
    <property type="project" value="GO_Central"/>
</dbReference>
<dbReference type="GO" id="GO:0016485">
    <property type="term" value="P:protein processing"/>
    <property type="evidence" value="ECO:0000318"/>
    <property type="project" value="GO_Central"/>
</dbReference>
<dbReference type="CDD" id="cd08662">
    <property type="entry name" value="M13"/>
    <property type="match status" value="1"/>
</dbReference>
<dbReference type="Gene3D" id="3.40.390.10">
    <property type="entry name" value="Collagenase (Catalytic Domain)"/>
    <property type="match status" value="1"/>
</dbReference>
<dbReference type="Gene3D" id="1.10.1380.10">
    <property type="entry name" value="Neutral endopeptidase , domain2"/>
    <property type="match status" value="1"/>
</dbReference>
<dbReference type="InterPro" id="IPR024079">
    <property type="entry name" value="MetalloPept_cat_dom_sf"/>
</dbReference>
<dbReference type="InterPro" id="IPR000718">
    <property type="entry name" value="Peptidase_M13"/>
</dbReference>
<dbReference type="InterPro" id="IPR018497">
    <property type="entry name" value="Peptidase_M13_C"/>
</dbReference>
<dbReference type="InterPro" id="IPR042089">
    <property type="entry name" value="Peptidase_M13_dom_2"/>
</dbReference>
<dbReference type="InterPro" id="IPR008753">
    <property type="entry name" value="Peptidase_M13_N"/>
</dbReference>
<dbReference type="PANTHER" id="PTHR11733:SF192">
    <property type="entry name" value="NEPRILYSIN-21"/>
    <property type="match status" value="1"/>
</dbReference>
<dbReference type="PANTHER" id="PTHR11733">
    <property type="entry name" value="ZINC METALLOPROTEASE FAMILY M13 NEPRILYSIN-RELATED"/>
    <property type="match status" value="1"/>
</dbReference>
<dbReference type="Pfam" id="PF01431">
    <property type="entry name" value="Peptidase_M13"/>
    <property type="match status" value="1"/>
</dbReference>
<dbReference type="Pfam" id="PF05649">
    <property type="entry name" value="Peptidase_M13_N"/>
    <property type="match status" value="1"/>
</dbReference>
<dbReference type="PRINTS" id="PR00786">
    <property type="entry name" value="NEPRILYSIN"/>
</dbReference>
<dbReference type="SUPFAM" id="SSF55486">
    <property type="entry name" value="Metalloproteases ('zincins'), catalytic domain"/>
    <property type="match status" value="1"/>
</dbReference>
<dbReference type="PROSITE" id="PS51885">
    <property type="entry name" value="NEPRILYSIN"/>
    <property type="match status" value="1"/>
</dbReference>
<dbReference type="PROSITE" id="PS00142">
    <property type="entry name" value="ZINC_PROTEASE"/>
    <property type="match status" value="1"/>
</dbReference>
<accession>Q22523</accession>
<gene>
    <name type="primary">nep-21</name>
    <name type="ORF">T16A9.4</name>
</gene>
<reference key="1">
    <citation type="journal article" date="1998" name="Science">
        <title>Genome sequence of the nematode C. elegans: a platform for investigating biology.</title>
        <authorList>
            <consortium name="The C. elegans sequencing consortium"/>
        </authorList>
    </citation>
    <scope>NUCLEOTIDE SEQUENCE [LARGE SCALE GENOMIC DNA]</scope>
    <source>
        <strain>Bristol N2</strain>
    </source>
</reference>
<reference key="2">
    <citation type="journal article" date="2007" name="Mol. Cell. Proteomics">
        <title>Proteomics reveals N-linked glycoprotein diversity in Caenorhabditis elegans and suggests an atypical translocation mechanism for integral membrane proteins.</title>
        <authorList>
            <person name="Kaji H."/>
            <person name="Kamiie J."/>
            <person name="Kawakami H."/>
            <person name="Kido K."/>
            <person name="Yamauchi Y."/>
            <person name="Shinkawa T."/>
            <person name="Taoka M."/>
            <person name="Takahashi N."/>
            <person name="Isobe T."/>
        </authorList>
    </citation>
    <scope>GLYCOSYLATION [LARGE SCALE ANALYSIS] AT ASN-307</scope>
    <scope>IDENTIFICATION BY MASS SPECTROMETRY</scope>
    <source>
        <strain>Bristol N2</strain>
    </source>
</reference>
<proteinExistence type="evidence at protein level"/>
<feature type="chain" id="PRO_0000078234" description="Neprilysin-21">
    <location>
        <begin position="1"/>
        <end position="769"/>
    </location>
</feature>
<feature type="topological domain" description="Cytoplasmic" evidence="2">
    <location>
        <begin position="1"/>
        <end position="26"/>
    </location>
</feature>
<feature type="transmembrane region" description="Helical; Signal-anchor for type II membrane protein" evidence="2">
    <location>
        <begin position="27"/>
        <end position="47"/>
    </location>
</feature>
<feature type="topological domain" description="Extracellular" evidence="2">
    <location>
        <begin position="48"/>
        <end position="769"/>
    </location>
</feature>
<feature type="domain" description="Peptidase M13" evidence="3">
    <location>
        <begin position="85"/>
        <end position="769"/>
    </location>
</feature>
<feature type="active site" evidence="3 4">
    <location>
        <position position="602"/>
    </location>
</feature>
<feature type="active site" description="Proton donor" evidence="3">
    <location>
        <position position="667"/>
    </location>
</feature>
<feature type="binding site" evidence="3 4">
    <location>
        <position position="601"/>
    </location>
    <ligand>
        <name>Zn(2+)</name>
        <dbReference type="ChEBI" id="CHEBI:29105"/>
        <note>catalytic</note>
    </ligand>
</feature>
<feature type="binding site" evidence="3 4">
    <location>
        <position position="605"/>
    </location>
    <ligand>
        <name>Zn(2+)</name>
        <dbReference type="ChEBI" id="CHEBI:29105"/>
        <note>catalytic</note>
    </ligand>
</feature>
<feature type="binding site" evidence="3">
    <location>
        <position position="663"/>
    </location>
    <ligand>
        <name>Zn(2+)</name>
        <dbReference type="ChEBI" id="CHEBI:29105"/>
        <note>catalytic</note>
    </ligand>
</feature>
<feature type="glycosylation site" description="N-linked (GlcNAc...) asparagine" evidence="2">
    <location>
        <position position="69"/>
    </location>
</feature>
<feature type="glycosylation site" description="N-linked (GlcNAc...) asparagine" evidence="2">
    <location>
        <position position="221"/>
    </location>
</feature>
<feature type="glycosylation site" description="N-linked (GlcNAc...) asparagine" evidence="2">
    <location>
        <position position="240"/>
    </location>
</feature>
<feature type="glycosylation site" description="N-linked (GlcNAc...) asparagine" evidence="2">
    <location>
        <position position="272"/>
    </location>
</feature>
<feature type="glycosylation site" description="N-linked (GlcNAc...) asparagine" evidence="5">
    <location>
        <position position="307"/>
    </location>
</feature>
<feature type="glycosylation site" description="N-linked (GlcNAc...) asparagine" evidence="2">
    <location>
        <position position="356"/>
    </location>
</feature>
<feature type="glycosylation site" description="N-linked (GlcNAc...) asparagine" evidence="2">
    <location>
        <position position="412"/>
    </location>
</feature>
<feature type="glycosylation site" description="N-linked (GlcNAc...) asparagine" evidence="2">
    <location>
        <position position="506"/>
    </location>
</feature>
<feature type="glycosylation site" description="N-linked (GlcNAc...) asparagine" evidence="2">
    <location>
        <position position="684"/>
    </location>
</feature>
<feature type="glycosylation site" description="N-linked (GlcNAc...) asparagine" evidence="2">
    <location>
        <position position="698"/>
    </location>
</feature>
<feature type="disulfide bond" evidence="3">
    <location>
        <begin position="86"/>
        <end position="91"/>
    </location>
</feature>
<feature type="disulfide bond" evidence="3">
    <location>
        <begin position="109"/>
        <end position="754"/>
    </location>
</feature>
<feature type="disulfide bond" evidence="3">
    <location>
        <begin position="117"/>
        <end position="714"/>
    </location>
</feature>
<feature type="disulfide bond" evidence="3">
    <location>
        <begin position="173"/>
        <end position="428"/>
    </location>
</feature>
<feature type="disulfide bond" evidence="3">
    <location>
        <begin position="638"/>
        <end position="766"/>
    </location>
</feature>
<sequence>MKPENGAATWHPAKRSCLGRLTTLETLLLVFLGLLITALLSVLFLWLWVLDGYKTFTDGRPIYPLPFENSSVAVDRSAKNHNDVVCTSRECVRLAGFLAENLNSKINPCEDFYEFACGNYGLNKNLPANKPLRHTISDVQSRLNKQVKSMLQSPISANEKPWDKVAKGYYQKCLDEEELESTGVEAMRDIAKRIGGWPTLEGDKWQEWSHSWEEQIALVLNLTGVNAVILEMAVTHDPSNSSRSVIELDQPKWGAGSRYPYLSGANDPMLRNYTTLMKMTAVALGADPAIAEKEMNEAMEFELKLVNFSADDMVRRDPERGNNRFELWQLKSVFPFINFEKYLKTVFKELVALSPNHTVIVREIDYFVGIQHVLQSTPKRVLANYISWRLVQGFSPFLPPSAREPFYQFKANQTGMFNSPPPDRWEDCVTLSVIMMDMPVGRLFVENFFEKERAMKKMTELTSYLKNEFIKQLHVLDWMDEITRRRAISKANMIEYKSGFPMVLFNDTWMEKNWGMIIKPREYLLHLTIRVKLVRFTEELLRLDQPLDRSMWFQSPAQVDAYYAPNNNEMIFPAGIMQFPFLTLGVPNYITYGMVGAVIGHEVSHAFDDQGGQYDEMGNLNDWWDAETEEKFIEKTRCFVRQYENVHVVEADIHLNGQLSLGENIADNGGVKTAFNAYKAWKSNTTGISEPALPGFQNFTSQQMFFLAYANNWCSLVRPKHYIQIILTDVHAPSKYRAMIPLQNRPEFAKAFQCPIGSPMNPERKCQVW</sequence>
<evidence type="ECO:0000250" key="1"/>
<evidence type="ECO:0000255" key="2"/>
<evidence type="ECO:0000255" key="3">
    <source>
        <dbReference type="PROSITE-ProRule" id="PRU01233"/>
    </source>
</evidence>
<evidence type="ECO:0000255" key="4">
    <source>
        <dbReference type="PROSITE-ProRule" id="PRU10095"/>
    </source>
</evidence>
<evidence type="ECO:0000269" key="5">
    <source>
    </source>
</evidence>
<evidence type="ECO:0000305" key="6"/>